<sequence length="229" mass="25597">MLICIPDVLSKDEVAEFRRIMDAAEWEDGRSTAGAQSAMVKRNEQLPPDGEAARLLGQRVITALTKNPRFLSAAIPLQIFPPLFNRYTSSRGDHFGIHVDNAVRGDPLTGLRIRTDLSMTLFLAEPDTYDGGELVIEDTYGSHEVKLPAGHAVLYPSSSLHMVTPVTRGARVASFFWMQSMIRDAHVRSMIFDLDTTIQSLTERFGRDDPDAVKLTGIYHNLIRQWAEV</sequence>
<evidence type="ECO:0000255" key="1">
    <source>
        <dbReference type="HAMAP-Rule" id="MF_00657"/>
    </source>
</evidence>
<feature type="chain" id="PRO_0000346465" description="PKHD-type hydroxylase BRADO4652">
    <location>
        <begin position="1"/>
        <end position="229"/>
    </location>
</feature>
<feature type="domain" description="Fe2OG dioxygenase" evidence="1">
    <location>
        <begin position="78"/>
        <end position="180"/>
    </location>
</feature>
<feature type="binding site" evidence="1">
    <location>
        <position position="98"/>
    </location>
    <ligand>
        <name>Fe cation</name>
        <dbReference type="ChEBI" id="CHEBI:24875"/>
    </ligand>
</feature>
<feature type="binding site" evidence="1">
    <location>
        <position position="100"/>
    </location>
    <ligand>
        <name>Fe cation</name>
        <dbReference type="ChEBI" id="CHEBI:24875"/>
    </ligand>
</feature>
<feature type="binding site" evidence="1">
    <location>
        <position position="161"/>
    </location>
    <ligand>
        <name>Fe cation</name>
        <dbReference type="ChEBI" id="CHEBI:24875"/>
    </ligand>
</feature>
<feature type="binding site" evidence="1">
    <location>
        <position position="171"/>
    </location>
    <ligand>
        <name>2-oxoglutarate</name>
        <dbReference type="ChEBI" id="CHEBI:16810"/>
    </ligand>
</feature>
<accession>A4YWV8</accession>
<comment type="cofactor">
    <cofactor evidence="1">
        <name>Fe(2+)</name>
        <dbReference type="ChEBI" id="CHEBI:29033"/>
    </cofactor>
    <text evidence="1">Binds 1 Fe(2+) ion per subunit.</text>
</comment>
<comment type="cofactor">
    <cofactor evidence="1">
        <name>L-ascorbate</name>
        <dbReference type="ChEBI" id="CHEBI:38290"/>
    </cofactor>
</comment>
<name>Y4652_BRASO</name>
<protein>
    <recommendedName>
        <fullName evidence="1">PKHD-type hydroxylase BRADO4652</fullName>
        <ecNumber evidence="1">1.14.11.-</ecNumber>
    </recommendedName>
</protein>
<reference key="1">
    <citation type="journal article" date="2007" name="Science">
        <title>Legumes symbioses: absence of nod genes in photosynthetic bradyrhizobia.</title>
        <authorList>
            <person name="Giraud E."/>
            <person name="Moulin L."/>
            <person name="Vallenet D."/>
            <person name="Barbe V."/>
            <person name="Cytryn E."/>
            <person name="Avarre J.-C."/>
            <person name="Jaubert M."/>
            <person name="Simon D."/>
            <person name="Cartieaux F."/>
            <person name="Prin Y."/>
            <person name="Bena G."/>
            <person name="Hannibal L."/>
            <person name="Fardoux J."/>
            <person name="Kojadinovic M."/>
            <person name="Vuillet L."/>
            <person name="Lajus A."/>
            <person name="Cruveiller S."/>
            <person name="Rouy Z."/>
            <person name="Mangenot S."/>
            <person name="Segurens B."/>
            <person name="Dossat C."/>
            <person name="Franck W.L."/>
            <person name="Chang W.-S."/>
            <person name="Saunders E."/>
            <person name="Bruce D."/>
            <person name="Richardson P."/>
            <person name="Normand P."/>
            <person name="Dreyfus B."/>
            <person name="Pignol D."/>
            <person name="Stacey G."/>
            <person name="Emerich D."/>
            <person name="Vermeglio A."/>
            <person name="Medigue C."/>
            <person name="Sadowsky M."/>
        </authorList>
    </citation>
    <scope>NUCLEOTIDE SEQUENCE [LARGE SCALE GENOMIC DNA]</scope>
    <source>
        <strain>ORS 278</strain>
    </source>
</reference>
<organism>
    <name type="scientific">Bradyrhizobium sp. (strain ORS 278)</name>
    <dbReference type="NCBI Taxonomy" id="114615"/>
    <lineage>
        <taxon>Bacteria</taxon>
        <taxon>Pseudomonadati</taxon>
        <taxon>Pseudomonadota</taxon>
        <taxon>Alphaproteobacteria</taxon>
        <taxon>Hyphomicrobiales</taxon>
        <taxon>Nitrobacteraceae</taxon>
        <taxon>Bradyrhizobium</taxon>
    </lineage>
</organism>
<gene>
    <name type="ordered locus">BRADO4652</name>
</gene>
<proteinExistence type="inferred from homology"/>
<dbReference type="EC" id="1.14.11.-" evidence="1"/>
<dbReference type="EMBL" id="CU234118">
    <property type="protein sequence ID" value="CAL78384.1"/>
    <property type="molecule type" value="Genomic_DNA"/>
</dbReference>
<dbReference type="RefSeq" id="WP_011927487.1">
    <property type="nucleotide sequence ID" value="NC_009445.1"/>
</dbReference>
<dbReference type="SMR" id="A4YWV8"/>
<dbReference type="STRING" id="114615.BRADO4652"/>
<dbReference type="KEGG" id="bra:BRADO4652"/>
<dbReference type="eggNOG" id="COG3128">
    <property type="taxonomic scope" value="Bacteria"/>
</dbReference>
<dbReference type="HOGENOM" id="CLU_106663_0_0_5"/>
<dbReference type="OrthoDB" id="9812472at2"/>
<dbReference type="Proteomes" id="UP000001994">
    <property type="component" value="Chromosome"/>
</dbReference>
<dbReference type="GO" id="GO:0016706">
    <property type="term" value="F:2-oxoglutarate-dependent dioxygenase activity"/>
    <property type="evidence" value="ECO:0007669"/>
    <property type="project" value="UniProtKB-UniRule"/>
</dbReference>
<dbReference type="GO" id="GO:0005506">
    <property type="term" value="F:iron ion binding"/>
    <property type="evidence" value="ECO:0007669"/>
    <property type="project" value="UniProtKB-UniRule"/>
</dbReference>
<dbReference type="GO" id="GO:0031418">
    <property type="term" value="F:L-ascorbic acid binding"/>
    <property type="evidence" value="ECO:0007669"/>
    <property type="project" value="UniProtKB-KW"/>
</dbReference>
<dbReference type="GO" id="GO:0006974">
    <property type="term" value="P:DNA damage response"/>
    <property type="evidence" value="ECO:0007669"/>
    <property type="project" value="TreeGrafter"/>
</dbReference>
<dbReference type="GO" id="GO:0006879">
    <property type="term" value="P:intracellular iron ion homeostasis"/>
    <property type="evidence" value="ECO:0007669"/>
    <property type="project" value="TreeGrafter"/>
</dbReference>
<dbReference type="Gene3D" id="2.60.120.620">
    <property type="entry name" value="q2cbj1_9rhob like domain"/>
    <property type="match status" value="1"/>
</dbReference>
<dbReference type="Gene3D" id="4.10.860.20">
    <property type="entry name" value="Rabenosyn, Rab binding domain"/>
    <property type="match status" value="1"/>
</dbReference>
<dbReference type="HAMAP" id="MF_00657">
    <property type="entry name" value="Hydroxyl_YbiX"/>
    <property type="match status" value="1"/>
</dbReference>
<dbReference type="InterPro" id="IPR005123">
    <property type="entry name" value="Oxoglu/Fe-dep_dioxygenase_dom"/>
</dbReference>
<dbReference type="InterPro" id="IPR041097">
    <property type="entry name" value="PKHD_C"/>
</dbReference>
<dbReference type="InterPro" id="IPR023550">
    <property type="entry name" value="PKHD_hydroxylase"/>
</dbReference>
<dbReference type="InterPro" id="IPR006620">
    <property type="entry name" value="Pro_4_hyd_alph"/>
</dbReference>
<dbReference type="InterPro" id="IPR044862">
    <property type="entry name" value="Pro_4_hyd_alph_FE2OG_OXY"/>
</dbReference>
<dbReference type="NCBIfam" id="NF003973">
    <property type="entry name" value="PRK05467.1-2"/>
    <property type="match status" value="1"/>
</dbReference>
<dbReference type="NCBIfam" id="NF003974">
    <property type="entry name" value="PRK05467.1-3"/>
    <property type="match status" value="1"/>
</dbReference>
<dbReference type="NCBIfam" id="NF003975">
    <property type="entry name" value="PRK05467.1-4"/>
    <property type="match status" value="1"/>
</dbReference>
<dbReference type="PANTHER" id="PTHR41536">
    <property type="entry name" value="PKHD-TYPE HYDROXYLASE YBIX"/>
    <property type="match status" value="1"/>
</dbReference>
<dbReference type="PANTHER" id="PTHR41536:SF1">
    <property type="entry name" value="PKHD-TYPE HYDROXYLASE YBIX"/>
    <property type="match status" value="1"/>
</dbReference>
<dbReference type="Pfam" id="PF13640">
    <property type="entry name" value="2OG-FeII_Oxy_3"/>
    <property type="match status" value="1"/>
</dbReference>
<dbReference type="Pfam" id="PF18331">
    <property type="entry name" value="PKHD_C"/>
    <property type="match status" value="1"/>
</dbReference>
<dbReference type="SMART" id="SM00702">
    <property type="entry name" value="P4Hc"/>
    <property type="match status" value="1"/>
</dbReference>
<dbReference type="SUPFAM" id="SSF51197">
    <property type="entry name" value="Clavaminate synthase-like"/>
    <property type="match status" value="1"/>
</dbReference>
<dbReference type="PROSITE" id="PS51471">
    <property type="entry name" value="FE2OG_OXY"/>
    <property type="match status" value="1"/>
</dbReference>
<keyword id="KW-0223">Dioxygenase</keyword>
<keyword id="KW-0408">Iron</keyword>
<keyword id="KW-0479">Metal-binding</keyword>
<keyword id="KW-0560">Oxidoreductase</keyword>
<keyword id="KW-1185">Reference proteome</keyword>
<keyword id="KW-0847">Vitamin C</keyword>